<accession>Q8K3A4</accession>
<accession>Q3U0N5</accession>
<accession>Q3UK55</accession>
<accession>Q99JS2</accession>
<keyword id="KW-0131">Cell cycle</keyword>
<keyword id="KW-0158">Chromosome</keyword>
<keyword id="KW-0227">DNA damage</keyword>
<keyword id="KW-0234">DNA repair</keyword>
<keyword id="KW-0539">Nucleus</keyword>
<keyword id="KW-0597">Phosphoprotein</keyword>
<keyword id="KW-1185">Reference proteome</keyword>
<keyword id="KW-0832">Ubl conjugation</keyword>
<gene>
    <name type="primary">Rhno1</name>
</gene>
<reference key="1">
    <citation type="journal article" date="2005" name="Science">
        <title>The transcriptional landscape of the mammalian genome.</title>
        <authorList>
            <person name="Carninci P."/>
            <person name="Kasukawa T."/>
            <person name="Katayama S."/>
            <person name="Gough J."/>
            <person name="Frith M.C."/>
            <person name="Maeda N."/>
            <person name="Oyama R."/>
            <person name="Ravasi T."/>
            <person name="Lenhard B."/>
            <person name="Wells C."/>
            <person name="Kodzius R."/>
            <person name="Shimokawa K."/>
            <person name="Bajic V.B."/>
            <person name="Brenner S.E."/>
            <person name="Batalov S."/>
            <person name="Forrest A.R."/>
            <person name="Zavolan M."/>
            <person name="Davis M.J."/>
            <person name="Wilming L.G."/>
            <person name="Aidinis V."/>
            <person name="Allen J.E."/>
            <person name="Ambesi-Impiombato A."/>
            <person name="Apweiler R."/>
            <person name="Aturaliya R.N."/>
            <person name="Bailey T.L."/>
            <person name="Bansal M."/>
            <person name="Baxter L."/>
            <person name="Beisel K.W."/>
            <person name="Bersano T."/>
            <person name="Bono H."/>
            <person name="Chalk A.M."/>
            <person name="Chiu K.P."/>
            <person name="Choudhary V."/>
            <person name="Christoffels A."/>
            <person name="Clutterbuck D.R."/>
            <person name="Crowe M.L."/>
            <person name="Dalla E."/>
            <person name="Dalrymple B.P."/>
            <person name="de Bono B."/>
            <person name="Della Gatta G."/>
            <person name="di Bernardo D."/>
            <person name="Down T."/>
            <person name="Engstrom P."/>
            <person name="Fagiolini M."/>
            <person name="Faulkner G."/>
            <person name="Fletcher C.F."/>
            <person name="Fukushima T."/>
            <person name="Furuno M."/>
            <person name="Futaki S."/>
            <person name="Gariboldi M."/>
            <person name="Georgii-Hemming P."/>
            <person name="Gingeras T.R."/>
            <person name="Gojobori T."/>
            <person name="Green R.E."/>
            <person name="Gustincich S."/>
            <person name="Harbers M."/>
            <person name="Hayashi Y."/>
            <person name="Hensch T.K."/>
            <person name="Hirokawa N."/>
            <person name="Hill D."/>
            <person name="Huminiecki L."/>
            <person name="Iacono M."/>
            <person name="Ikeo K."/>
            <person name="Iwama A."/>
            <person name="Ishikawa T."/>
            <person name="Jakt M."/>
            <person name="Kanapin A."/>
            <person name="Katoh M."/>
            <person name="Kawasawa Y."/>
            <person name="Kelso J."/>
            <person name="Kitamura H."/>
            <person name="Kitano H."/>
            <person name="Kollias G."/>
            <person name="Krishnan S.P."/>
            <person name="Kruger A."/>
            <person name="Kummerfeld S.K."/>
            <person name="Kurochkin I.V."/>
            <person name="Lareau L.F."/>
            <person name="Lazarevic D."/>
            <person name="Lipovich L."/>
            <person name="Liu J."/>
            <person name="Liuni S."/>
            <person name="McWilliam S."/>
            <person name="Madan Babu M."/>
            <person name="Madera M."/>
            <person name="Marchionni L."/>
            <person name="Matsuda H."/>
            <person name="Matsuzawa S."/>
            <person name="Miki H."/>
            <person name="Mignone F."/>
            <person name="Miyake S."/>
            <person name="Morris K."/>
            <person name="Mottagui-Tabar S."/>
            <person name="Mulder N."/>
            <person name="Nakano N."/>
            <person name="Nakauchi H."/>
            <person name="Ng P."/>
            <person name="Nilsson R."/>
            <person name="Nishiguchi S."/>
            <person name="Nishikawa S."/>
            <person name="Nori F."/>
            <person name="Ohara O."/>
            <person name="Okazaki Y."/>
            <person name="Orlando V."/>
            <person name="Pang K.C."/>
            <person name="Pavan W.J."/>
            <person name="Pavesi G."/>
            <person name="Pesole G."/>
            <person name="Petrovsky N."/>
            <person name="Piazza S."/>
            <person name="Reed J."/>
            <person name="Reid J.F."/>
            <person name="Ring B.Z."/>
            <person name="Ringwald M."/>
            <person name="Rost B."/>
            <person name="Ruan Y."/>
            <person name="Salzberg S.L."/>
            <person name="Sandelin A."/>
            <person name="Schneider C."/>
            <person name="Schoenbach C."/>
            <person name="Sekiguchi K."/>
            <person name="Semple C.A."/>
            <person name="Seno S."/>
            <person name="Sessa L."/>
            <person name="Sheng Y."/>
            <person name="Shibata Y."/>
            <person name="Shimada H."/>
            <person name="Shimada K."/>
            <person name="Silva D."/>
            <person name="Sinclair B."/>
            <person name="Sperling S."/>
            <person name="Stupka E."/>
            <person name="Sugiura K."/>
            <person name="Sultana R."/>
            <person name="Takenaka Y."/>
            <person name="Taki K."/>
            <person name="Tammoja K."/>
            <person name="Tan S.L."/>
            <person name="Tang S."/>
            <person name="Taylor M.S."/>
            <person name="Tegner J."/>
            <person name="Teichmann S.A."/>
            <person name="Ueda H.R."/>
            <person name="van Nimwegen E."/>
            <person name="Verardo R."/>
            <person name="Wei C.L."/>
            <person name="Yagi K."/>
            <person name="Yamanishi H."/>
            <person name="Zabarovsky E."/>
            <person name="Zhu S."/>
            <person name="Zimmer A."/>
            <person name="Hide W."/>
            <person name="Bult C."/>
            <person name="Grimmond S.M."/>
            <person name="Teasdale R.D."/>
            <person name="Liu E.T."/>
            <person name="Brusic V."/>
            <person name="Quackenbush J."/>
            <person name="Wahlestedt C."/>
            <person name="Mattick J.S."/>
            <person name="Hume D.A."/>
            <person name="Kai C."/>
            <person name="Sasaki D."/>
            <person name="Tomaru Y."/>
            <person name="Fukuda S."/>
            <person name="Kanamori-Katayama M."/>
            <person name="Suzuki M."/>
            <person name="Aoki J."/>
            <person name="Arakawa T."/>
            <person name="Iida J."/>
            <person name="Imamura K."/>
            <person name="Itoh M."/>
            <person name="Kato T."/>
            <person name="Kawaji H."/>
            <person name="Kawagashira N."/>
            <person name="Kawashima T."/>
            <person name="Kojima M."/>
            <person name="Kondo S."/>
            <person name="Konno H."/>
            <person name="Nakano K."/>
            <person name="Ninomiya N."/>
            <person name="Nishio T."/>
            <person name="Okada M."/>
            <person name="Plessy C."/>
            <person name="Shibata K."/>
            <person name="Shiraki T."/>
            <person name="Suzuki S."/>
            <person name="Tagami M."/>
            <person name="Waki K."/>
            <person name="Watahiki A."/>
            <person name="Okamura-Oho Y."/>
            <person name="Suzuki H."/>
            <person name="Kawai J."/>
            <person name="Hayashizaki Y."/>
        </authorList>
    </citation>
    <scope>NUCLEOTIDE SEQUENCE [LARGE SCALE MRNA]</scope>
    <source>
        <strain>BALB/cJ</strain>
        <strain>DBA/2J</strain>
        <strain>NOD</strain>
        <tissue>Spleen</tissue>
    </source>
</reference>
<reference key="2">
    <citation type="journal article" date="2004" name="Genome Res.">
        <title>The status, quality, and expansion of the NIH full-length cDNA project: the Mammalian Gene Collection (MGC).</title>
        <authorList>
            <consortium name="The MGC Project Team"/>
        </authorList>
    </citation>
    <scope>NUCLEOTIDE SEQUENCE [LARGE SCALE MRNA]</scope>
    <source>
        <strain>FVB/N</strain>
        <tissue>Mammary gland</tissue>
        <tissue>Mammary tumor</tissue>
    </source>
</reference>
<proteinExistence type="evidence at transcript level"/>
<name>RHNO1_MOUSE</name>
<sequence length="235" mass="26820">MPPKKRRRQSQKAQLLFHQQPLEGPKHHYESCQQPITHTVQVPSKPIDQSTVTSWVSPQFDRAAESRFLIHWKPHRDQARRPTRRSTCKFPRLTFESPQSSSSETLLLSNRVQPQNSEKDPPRRPLVPLFSPQSCGELSVHVPHSLPHVFAPPDIQTPDSSVRDDPISPDQKENSFPSCILGPGTPSSPEPGPVLVKDTPEEKYGIKVTWRRRRHLFAYLKEKGKLDGSQFLVKI</sequence>
<evidence type="ECO:0000250" key="1">
    <source>
        <dbReference type="UniProtKB" id="Q9BSD3"/>
    </source>
</evidence>
<evidence type="ECO:0000256" key="2">
    <source>
        <dbReference type="SAM" id="MobiDB-lite"/>
    </source>
</evidence>
<evidence type="ECO:0000305" key="3"/>
<dbReference type="EMBL" id="AK146167">
    <property type="protein sequence ID" value="BAE26947.1"/>
    <property type="molecule type" value="mRNA"/>
</dbReference>
<dbReference type="EMBL" id="AK156717">
    <property type="protein sequence ID" value="BAE33817.1"/>
    <property type="molecule type" value="mRNA"/>
</dbReference>
<dbReference type="EMBL" id="AK168313">
    <property type="protein sequence ID" value="BAE40253.1"/>
    <property type="molecule type" value="mRNA"/>
</dbReference>
<dbReference type="EMBL" id="BC005726">
    <property type="status" value="NOT_ANNOTATED_CDS"/>
    <property type="molecule type" value="mRNA"/>
</dbReference>
<dbReference type="EMBL" id="BC027368">
    <property type="status" value="NOT_ANNOTATED_CDS"/>
    <property type="molecule type" value="mRNA"/>
</dbReference>
<dbReference type="CCDS" id="CCDS85164.1"/>
<dbReference type="FunCoup" id="Q8K3A4">
    <property type="interactions" value="1433"/>
</dbReference>
<dbReference type="IntAct" id="Q8K3A4">
    <property type="interactions" value="1"/>
</dbReference>
<dbReference type="STRING" id="10090.ENSMUSP00000107779"/>
<dbReference type="PaxDb" id="10090-ENSMUSP00000114836"/>
<dbReference type="AGR" id="MGI:1915315"/>
<dbReference type="MGI" id="MGI:1915315">
    <property type="gene designation" value="Rhno1"/>
</dbReference>
<dbReference type="eggNOG" id="ENOG502S7M3">
    <property type="taxonomic scope" value="Eukaryota"/>
</dbReference>
<dbReference type="InParanoid" id="Q8K3A4"/>
<dbReference type="PhylomeDB" id="Q8K3A4"/>
<dbReference type="Reactome" id="R-MMU-5685938">
    <property type="pathway name" value="HDR through Single Strand Annealing (SSA)"/>
</dbReference>
<dbReference type="Reactome" id="R-MMU-5693607">
    <property type="pathway name" value="Processing of DNA double-strand break ends"/>
</dbReference>
<dbReference type="Reactome" id="R-MMU-6804756">
    <property type="pathway name" value="Regulation of TP53 Activity through Phosphorylation"/>
</dbReference>
<dbReference type="Reactome" id="R-MMU-69473">
    <property type="pathway name" value="G2/M DNA damage checkpoint"/>
</dbReference>
<dbReference type="ChiTaRS" id="Rhno1">
    <property type="organism name" value="mouse"/>
</dbReference>
<dbReference type="PRO" id="PR:Q8K3A4"/>
<dbReference type="Proteomes" id="UP000000589">
    <property type="component" value="Unplaced"/>
</dbReference>
<dbReference type="RNAct" id="Q8K3A4">
    <property type="molecule type" value="protein"/>
</dbReference>
<dbReference type="GO" id="GO:0005634">
    <property type="term" value="C:nucleus"/>
    <property type="evidence" value="ECO:0007669"/>
    <property type="project" value="UniProtKB-SubCell"/>
</dbReference>
<dbReference type="GO" id="GO:0035861">
    <property type="term" value="C:site of double-strand break"/>
    <property type="evidence" value="ECO:0000250"/>
    <property type="project" value="UniProtKB"/>
</dbReference>
<dbReference type="GO" id="GO:0140463">
    <property type="term" value="F:chromatin-protein adaptor activity"/>
    <property type="evidence" value="ECO:0000250"/>
    <property type="project" value="UniProtKB"/>
</dbReference>
<dbReference type="GO" id="GO:0071479">
    <property type="term" value="P:cellular response to ionizing radiation"/>
    <property type="evidence" value="ECO:0007669"/>
    <property type="project" value="InterPro"/>
</dbReference>
<dbReference type="GO" id="GO:0000077">
    <property type="term" value="P:DNA damage checkpoint signaling"/>
    <property type="evidence" value="ECO:0007669"/>
    <property type="project" value="InterPro"/>
</dbReference>
<dbReference type="GO" id="GO:0097681">
    <property type="term" value="P:double-strand break repair via alternative nonhomologous end joining"/>
    <property type="evidence" value="ECO:0000250"/>
    <property type="project" value="UniProtKB"/>
</dbReference>
<dbReference type="GO" id="GO:1990166">
    <property type="term" value="P:protein localization to site of double-strand break"/>
    <property type="evidence" value="ECO:0000250"/>
    <property type="project" value="UniProtKB"/>
</dbReference>
<dbReference type="InterPro" id="IPR029293">
    <property type="entry name" value="RHNO1"/>
</dbReference>
<dbReference type="PANTHER" id="PTHR35541">
    <property type="entry name" value="RAD9, HUS1, RAD1-INTERACTING NUCLEAR ORPHAN PROTEIN 1"/>
    <property type="match status" value="1"/>
</dbReference>
<dbReference type="PANTHER" id="PTHR35541:SF1">
    <property type="entry name" value="RAD9, HUS1, RAD1-INTERACTING NUCLEAR ORPHAN PROTEIN 1"/>
    <property type="match status" value="1"/>
</dbReference>
<dbReference type="Pfam" id="PF15319">
    <property type="entry name" value="RHINO"/>
    <property type="match status" value="1"/>
</dbReference>
<feature type="chain" id="PRO_0000263106" description="RAD9, HUS1, RAD1-interacting nuclear orphan protein 1">
    <location>
        <begin position="1"/>
        <end position="235"/>
    </location>
</feature>
<feature type="region of interest" description="Disordered" evidence="2">
    <location>
        <begin position="75"/>
        <end position="106"/>
    </location>
</feature>
<feature type="region of interest" description="Disordered" evidence="2">
    <location>
        <begin position="111"/>
        <end position="130"/>
    </location>
</feature>
<feature type="region of interest" description="Disordered" evidence="2">
    <location>
        <begin position="149"/>
        <end position="198"/>
    </location>
</feature>
<feature type="short sequence motif" description="RAD1-binding motif" evidence="1">
    <location>
        <begin position="54"/>
        <end position="60"/>
    </location>
</feature>
<feature type="short sequence motif" description="D-box" evidence="1">
    <location>
        <begin position="123"/>
        <end position="130"/>
    </location>
</feature>
<feature type="short sequence motif" description="KEN box" evidence="1">
    <location>
        <begin position="171"/>
        <end position="175"/>
    </location>
</feature>
<feature type="compositionally biased region" description="Polar residues" evidence="2">
    <location>
        <begin position="96"/>
        <end position="106"/>
    </location>
</feature>
<feature type="compositionally biased region" description="Basic and acidic residues" evidence="2">
    <location>
        <begin position="161"/>
        <end position="173"/>
    </location>
</feature>
<feature type="modified residue" description="Phosphoserine" evidence="1">
    <location>
        <position position="50"/>
    </location>
</feature>
<feature type="sequence conflict" description="In Ref. 1; BAE26947." evidence="3" ref="1">
    <original>P</original>
    <variation>T</variation>
    <location>
        <position position="25"/>
    </location>
</feature>
<feature type="sequence conflict" description="In Ref. 1; BAE26947." evidence="3" ref="1">
    <original>W</original>
    <variation>R</variation>
    <location>
        <position position="72"/>
    </location>
</feature>
<feature type="sequence conflict" description="In Ref. 1; BAE33817." evidence="3" ref="1">
    <original>H</original>
    <variation>N</variation>
    <location>
        <position position="144"/>
    </location>
</feature>
<comment type="function">
    <text evidence="1">Involved in microhomology-mediated end-joining (MMEJ) DNA repair by promoting recruitment of polymerase theta (POLQ) to DNA damage sites during mitosis. MMEJ is an alternative non-homologous end-joining (NHEJ) machinery that takes place during mitosis to repair double-strand breaks in DNA that originate in S-phase. Accumulates in M-phase; following phosphorylation by PLK1, interacts with POLQ, enabling its recruitment to double-strand breaks for subsequent repair. Also involved in the DNA damage response (DDR) signaling in response to genotoxic stresses such as ionizing radiation (IR) during the S phase. Recruited to sites of DNA damage through interaction with the 9-1-1 cell-cycle checkpoint response complex and TOPBP1 in a ATR-dependent manner. Required for the progression of the G1 to S phase transition. Plays a role in the stimulation of CHEK1 phosphorylation.</text>
</comment>
<comment type="subunit">
    <text evidence="1">Interacts (when phosphorylated by PLK1) with POLQ; promoting POLQ recruitment to DNA damage sites. Interacts with RAD1; interaction is direct and promotes association with the 9-1-1 (RAD9-RAD1-HUS1) complex. Interacts with RAD18. Interacts with TOPBP1. Interacts with UBE2N.</text>
</comment>
<comment type="subcellular location">
    <subcellularLocation>
        <location evidence="1">Nucleus</location>
    </subcellularLocation>
    <subcellularLocation>
        <location evidence="1">Chromosome</location>
    </subcellularLocation>
    <text evidence="1">Localizes to sites of DNA damage in a H2AX-independent manner.</text>
</comment>
<comment type="domain">
    <text evidence="1">The RAD1-binding motif mediates interaction with RAD1.</text>
</comment>
<comment type="PTM">
    <text evidence="1">Phosphorylated at Ser-50 by PLK1, promoting interaction with polymerase theta (POLQ).</text>
</comment>
<comment type="PTM">
    <text evidence="1">Ubiquitinated and degraded by the APC/C complex upon mitotic exit.</text>
</comment>
<protein>
    <recommendedName>
        <fullName>RAD9, HUS1, RAD1-interacting nuclear orphan protein 1</fullName>
    </recommendedName>
</protein>
<organism>
    <name type="scientific">Mus musculus</name>
    <name type="common">Mouse</name>
    <dbReference type="NCBI Taxonomy" id="10090"/>
    <lineage>
        <taxon>Eukaryota</taxon>
        <taxon>Metazoa</taxon>
        <taxon>Chordata</taxon>
        <taxon>Craniata</taxon>
        <taxon>Vertebrata</taxon>
        <taxon>Euteleostomi</taxon>
        <taxon>Mammalia</taxon>
        <taxon>Eutheria</taxon>
        <taxon>Euarchontoglires</taxon>
        <taxon>Glires</taxon>
        <taxon>Rodentia</taxon>
        <taxon>Myomorpha</taxon>
        <taxon>Muroidea</taxon>
        <taxon>Muridae</taxon>
        <taxon>Murinae</taxon>
        <taxon>Mus</taxon>
        <taxon>Mus</taxon>
    </lineage>
</organism>